<accession>P51181</accession>
<feature type="chain" id="PRO_0000112053" description="Pyruvate kinase">
    <location>
        <begin position="1"/>
        <end position="585"/>
    </location>
</feature>
<feature type="binding site" evidence="1">
    <location>
        <position position="32"/>
    </location>
    <ligand>
        <name>substrate</name>
    </ligand>
</feature>
<feature type="binding site" evidence="2">
    <location>
        <begin position="34"/>
        <end position="37"/>
    </location>
    <ligand>
        <name>ATP</name>
        <dbReference type="ChEBI" id="CHEBI:30616"/>
    </ligand>
</feature>
<feature type="binding site" evidence="1">
    <location>
        <position position="34"/>
    </location>
    <ligand>
        <name>K(+)</name>
        <dbReference type="ChEBI" id="CHEBI:29103"/>
    </ligand>
</feature>
<feature type="binding site" evidence="1">
    <location>
        <position position="36"/>
    </location>
    <ligand>
        <name>K(+)</name>
        <dbReference type="ChEBI" id="CHEBI:29103"/>
    </ligand>
</feature>
<feature type="binding site" evidence="1">
    <location>
        <position position="66"/>
    </location>
    <ligand>
        <name>K(+)</name>
        <dbReference type="ChEBI" id="CHEBI:29103"/>
    </ligand>
</feature>
<feature type="binding site" evidence="1">
    <location>
        <position position="67"/>
    </location>
    <ligand>
        <name>K(+)</name>
        <dbReference type="ChEBI" id="CHEBI:29103"/>
    </ligand>
</feature>
<feature type="binding site" evidence="2">
    <location>
        <position position="73"/>
    </location>
    <ligand>
        <name>ATP</name>
        <dbReference type="ChEBI" id="CHEBI:30616"/>
    </ligand>
</feature>
<feature type="binding site" evidence="2">
    <location>
        <position position="156"/>
    </location>
    <ligand>
        <name>ATP</name>
        <dbReference type="ChEBI" id="CHEBI:30616"/>
    </ligand>
</feature>
<feature type="binding site" evidence="1">
    <location>
        <position position="222"/>
    </location>
    <ligand>
        <name>Mg(2+)</name>
        <dbReference type="ChEBI" id="CHEBI:18420"/>
    </ligand>
</feature>
<feature type="binding site" evidence="1">
    <location>
        <position position="245"/>
    </location>
    <ligand>
        <name>substrate</name>
    </ligand>
</feature>
<feature type="binding site" evidence="1">
    <location>
        <position position="246"/>
    </location>
    <ligand>
        <name>Mg(2+)</name>
        <dbReference type="ChEBI" id="CHEBI:18420"/>
    </ligand>
</feature>
<feature type="binding site" evidence="1">
    <location>
        <position position="246"/>
    </location>
    <ligand>
        <name>substrate</name>
    </ligand>
</feature>
<feature type="binding site" evidence="1">
    <location>
        <position position="278"/>
    </location>
    <ligand>
        <name>substrate</name>
    </ligand>
</feature>
<feature type="site" description="Transition state stabilizer" evidence="1">
    <location>
        <position position="220"/>
    </location>
</feature>
<sequence>MRKTKIVCTIGPASESVEKLTQLMEAGMNVARLNFSHGDFEEHGARIKNIREAAGKLGKDIGILLDTKGPEIRTHTMENGSIELAAGSQLIVSMDEVIGTPDKISVTYDGLIHDVSVGSTILLDDGLVGLEVTDINKDKREIVTKVMNSGTLKNKKGVNVPGVSVNLPGITEKDANDIVFGIEQGVDFIAASFVRRPSDVLEIRELLEEHNAADIQIIPKIENQEGVDNIDAILEVSDGLMVARGDLGVEIPAEEVPLVQKELIKKCNALGKPVITATQMLDSMQRNPRPTRAEASDVANAIFDGTDAIMLSGETAAGNYPVEAVQTMHNIASRSEEALNHKKILSARSKQVSMSITDAIGQSVAHTAINLDVNAIVTPTESGHTARMISKYRPQAPIVAVTVNDAVSRKLSLVFGVFATSGQNHSSTDEMLEKAVQKSLDTGIVRHGDLIVITAGAVGEAGTTNLMKVYVVGDVVAKGQGIGRKSAFGEVVIAQNAQEAAKKMKDGAVLVTKSTDRDMMASLEKAAALITEEGGLTSHAAVVGLSLGIPVIVGMENATSILKEGEDITVDSARGAVYKGRASVL</sequence>
<proteinExistence type="inferred from homology"/>
<protein>
    <recommendedName>
        <fullName>Pyruvate kinase</fullName>
        <shortName>PK</shortName>
        <ecNumber>2.7.1.40</ecNumber>
    </recommendedName>
</protein>
<gene>
    <name type="primary">pyk</name>
</gene>
<evidence type="ECO:0000250" key="1"/>
<evidence type="ECO:0000250" key="2">
    <source>
        <dbReference type="UniProtKB" id="P14618"/>
    </source>
</evidence>
<evidence type="ECO:0000305" key="3"/>
<name>KPYK_BACLI</name>
<keyword id="KW-0067">ATP-binding</keyword>
<keyword id="KW-0324">Glycolysis</keyword>
<keyword id="KW-0418">Kinase</keyword>
<keyword id="KW-0460">Magnesium</keyword>
<keyword id="KW-0479">Metal-binding</keyword>
<keyword id="KW-0547">Nucleotide-binding</keyword>
<keyword id="KW-0630">Potassium</keyword>
<keyword id="KW-0670">Pyruvate</keyword>
<keyword id="KW-0808">Transferase</keyword>
<comment type="catalytic activity">
    <reaction>
        <text>pyruvate + ATP = phosphoenolpyruvate + ADP + H(+)</text>
        <dbReference type="Rhea" id="RHEA:18157"/>
        <dbReference type="ChEBI" id="CHEBI:15361"/>
        <dbReference type="ChEBI" id="CHEBI:15378"/>
        <dbReference type="ChEBI" id="CHEBI:30616"/>
        <dbReference type="ChEBI" id="CHEBI:58702"/>
        <dbReference type="ChEBI" id="CHEBI:456216"/>
        <dbReference type="EC" id="2.7.1.40"/>
    </reaction>
</comment>
<comment type="cofactor">
    <cofactor>
        <name>Mg(2+)</name>
        <dbReference type="ChEBI" id="CHEBI:18420"/>
    </cofactor>
</comment>
<comment type="cofactor">
    <cofactor>
        <name>K(+)</name>
        <dbReference type="ChEBI" id="CHEBI:29103"/>
    </cofactor>
</comment>
<comment type="pathway">
    <text>Carbohydrate degradation; glycolysis; pyruvate from D-glyceraldehyde 3-phosphate: step 5/5.</text>
</comment>
<comment type="subunit">
    <text evidence="1">Homotetramer.</text>
</comment>
<comment type="similarity">
    <text evidence="3">Belongs to the pyruvate kinase family.</text>
</comment>
<comment type="similarity">
    <text evidence="3">In the C-terminal section; belongs to the PEP-utilizing enzyme family.</text>
</comment>
<reference key="1">
    <citation type="journal article" date="1995" name="Biosci. Biotechnol. Biochem.">
        <title>Molecular cloning of the genes for pyruvate kinase of two bacilli, Bacillus psychrophilus and Bacillus licheniformis, and comparison of the properties of the enzymes produced in Escherichia coli.</title>
        <authorList>
            <person name="Tanaka K."/>
            <person name="Sakai H."/>
            <person name="Ohta T."/>
            <person name="Matsuzawa H."/>
        </authorList>
    </citation>
    <scope>NUCLEOTIDE SEQUENCE [GENOMIC DNA]</scope>
</reference>
<organism>
    <name type="scientific">Bacillus licheniformis</name>
    <dbReference type="NCBI Taxonomy" id="1402"/>
    <lineage>
        <taxon>Bacteria</taxon>
        <taxon>Bacillati</taxon>
        <taxon>Bacillota</taxon>
        <taxon>Bacilli</taxon>
        <taxon>Bacillales</taxon>
        <taxon>Bacillaceae</taxon>
        <taxon>Bacillus</taxon>
    </lineage>
</organism>
<dbReference type="EC" id="2.7.1.40"/>
<dbReference type="EMBL" id="D31955">
    <property type="protein sequence ID" value="BAA06727.1"/>
    <property type="molecule type" value="Genomic_DNA"/>
</dbReference>
<dbReference type="PIR" id="JC4220">
    <property type="entry name" value="JC4220"/>
</dbReference>
<dbReference type="RefSeq" id="WP_009329367.1">
    <property type="nucleotide sequence ID" value="NZ_CAKODR010000002.1"/>
</dbReference>
<dbReference type="SMR" id="P51181"/>
<dbReference type="GeneID" id="92860341"/>
<dbReference type="PATRIC" id="fig|1402.63.peg.2823"/>
<dbReference type="OMA" id="RVHHIGE"/>
<dbReference type="BRENDA" id="2.7.1.40">
    <property type="organism ID" value="669"/>
</dbReference>
<dbReference type="UniPathway" id="UPA00109">
    <property type="reaction ID" value="UER00188"/>
</dbReference>
<dbReference type="GO" id="GO:0005524">
    <property type="term" value="F:ATP binding"/>
    <property type="evidence" value="ECO:0007669"/>
    <property type="project" value="UniProtKB-KW"/>
</dbReference>
<dbReference type="GO" id="GO:0016301">
    <property type="term" value="F:kinase activity"/>
    <property type="evidence" value="ECO:0007669"/>
    <property type="project" value="UniProtKB-KW"/>
</dbReference>
<dbReference type="GO" id="GO:0000287">
    <property type="term" value="F:magnesium ion binding"/>
    <property type="evidence" value="ECO:0007669"/>
    <property type="project" value="InterPro"/>
</dbReference>
<dbReference type="GO" id="GO:0030955">
    <property type="term" value="F:potassium ion binding"/>
    <property type="evidence" value="ECO:0007669"/>
    <property type="project" value="InterPro"/>
</dbReference>
<dbReference type="GO" id="GO:0004743">
    <property type="term" value="F:pyruvate kinase activity"/>
    <property type="evidence" value="ECO:0007669"/>
    <property type="project" value="UniProtKB-EC"/>
</dbReference>
<dbReference type="CDD" id="cd00288">
    <property type="entry name" value="Pyruvate_Kinase"/>
    <property type="match status" value="1"/>
</dbReference>
<dbReference type="FunFam" id="2.40.33.10:FF:000001">
    <property type="entry name" value="Pyruvate kinase"/>
    <property type="match status" value="1"/>
</dbReference>
<dbReference type="FunFam" id="3.20.20.60:FF:000001">
    <property type="entry name" value="Pyruvate kinase"/>
    <property type="match status" value="1"/>
</dbReference>
<dbReference type="FunFam" id="3.40.1380.20:FF:000007">
    <property type="entry name" value="Pyruvate kinase"/>
    <property type="match status" value="1"/>
</dbReference>
<dbReference type="FunFam" id="3.50.30.10:FF:000004">
    <property type="entry name" value="Pyruvate kinase"/>
    <property type="match status" value="1"/>
</dbReference>
<dbReference type="Gene3D" id="3.20.20.60">
    <property type="entry name" value="Phosphoenolpyruvate-binding domains"/>
    <property type="match status" value="1"/>
</dbReference>
<dbReference type="Gene3D" id="3.50.30.10">
    <property type="entry name" value="Phosphohistidine domain"/>
    <property type="match status" value="1"/>
</dbReference>
<dbReference type="Gene3D" id="2.40.33.10">
    <property type="entry name" value="PK beta-barrel domain-like"/>
    <property type="match status" value="1"/>
</dbReference>
<dbReference type="Gene3D" id="3.40.1380.20">
    <property type="entry name" value="Pyruvate kinase, C-terminal domain"/>
    <property type="match status" value="1"/>
</dbReference>
<dbReference type="InterPro" id="IPR008279">
    <property type="entry name" value="PEP-util_enz_mobile_dom"/>
</dbReference>
<dbReference type="InterPro" id="IPR036637">
    <property type="entry name" value="Phosphohistidine_dom_sf"/>
</dbReference>
<dbReference type="InterPro" id="IPR001697">
    <property type="entry name" value="Pyr_Knase"/>
</dbReference>
<dbReference type="InterPro" id="IPR015813">
    <property type="entry name" value="Pyrv/PenolPyrv_kinase-like_dom"/>
</dbReference>
<dbReference type="InterPro" id="IPR040442">
    <property type="entry name" value="Pyrv_kinase-like_dom_sf"/>
</dbReference>
<dbReference type="InterPro" id="IPR011037">
    <property type="entry name" value="Pyrv_Knase-like_insert_dom_sf"/>
</dbReference>
<dbReference type="InterPro" id="IPR018209">
    <property type="entry name" value="Pyrv_Knase_AS"/>
</dbReference>
<dbReference type="InterPro" id="IPR015793">
    <property type="entry name" value="Pyrv_Knase_brl"/>
</dbReference>
<dbReference type="InterPro" id="IPR015795">
    <property type="entry name" value="Pyrv_Knase_C"/>
</dbReference>
<dbReference type="InterPro" id="IPR036918">
    <property type="entry name" value="Pyrv_Knase_C_sf"/>
</dbReference>
<dbReference type="InterPro" id="IPR015806">
    <property type="entry name" value="Pyrv_Knase_insert_dom_sf"/>
</dbReference>
<dbReference type="NCBIfam" id="NF004491">
    <property type="entry name" value="PRK05826.1"/>
    <property type="match status" value="1"/>
</dbReference>
<dbReference type="NCBIfam" id="NF004978">
    <property type="entry name" value="PRK06354.1"/>
    <property type="match status" value="1"/>
</dbReference>
<dbReference type="NCBIfam" id="TIGR01064">
    <property type="entry name" value="pyruv_kin"/>
    <property type="match status" value="1"/>
</dbReference>
<dbReference type="PANTHER" id="PTHR11817">
    <property type="entry name" value="PYRUVATE KINASE"/>
    <property type="match status" value="1"/>
</dbReference>
<dbReference type="Pfam" id="PF00391">
    <property type="entry name" value="PEP-utilizers"/>
    <property type="match status" value="1"/>
</dbReference>
<dbReference type="Pfam" id="PF00224">
    <property type="entry name" value="PK"/>
    <property type="match status" value="1"/>
</dbReference>
<dbReference type="Pfam" id="PF02887">
    <property type="entry name" value="PK_C"/>
    <property type="match status" value="1"/>
</dbReference>
<dbReference type="PRINTS" id="PR01050">
    <property type="entry name" value="PYRUVTKNASE"/>
</dbReference>
<dbReference type="SUPFAM" id="SSF51621">
    <property type="entry name" value="Phosphoenolpyruvate/pyruvate domain"/>
    <property type="match status" value="1"/>
</dbReference>
<dbReference type="SUPFAM" id="SSF52009">
    <property type="entry name" value="Phosphohistidine domain"/>
    <property type="match status" value="1"/>
</dbReference>
<dbReference type="SUPFAM" id="SSF50800">
    <property type="entry name" value="PK beta-barrel domain-like"/>
    <property type="match status" value="1"/>
</dbReference>
<dbReference type="SUPFAM" id="SSF52935">
    <property type="entry name" value="PK C-terminal domain-like"/>
    <property type="match status" value="1"/>
</dbReference>
<dbReference type="PROSITE" id="PS00110">
    <property type="entry name" value="PYRUVATE_KINASE"/>
    <property type="match status" value="1"/>
</dbReference>